<protein>
    <recommendedName>
        <fullName evidence="1">Urease accessory protein UreG 1</fullName>
    </recommendedName>
</protein>
<accession>B1ZHN6</accession>
<reference key="1">
    <citation type="submission" date="2008-04" db="EMBL/GenBank/DDBJ databases">
        <title>Complete sequence of chromosome of Methylobacterium populi BJ001.</title>
        <authorList>
            <consortium name="US DOE Joint Genome Institute"/>
            <person name="Copeland A."/>
            <person name="Lucas S."/>
            <person name="Lapidus A."/>
            <person name="Glavina del Rio T."/>
            <person name="Dalin E."/>
            <person name="Tice H."/>
            <person name="Bruce D."/>
            <person name="Goodwin L."/>
            <person name="Pitluck S."/>
            <person name="Chertkov O."/>
            <person name="Brettin T."/>
            <person name="Detter J.C."/>
            <person name="Han C."/>
            <person name="Kuske C.R."/>
            <person name="Schmutz J."/>
            <person name="Larimer F."/>
            <person name="Land M."/>
            <person name="Hauser L."/>
            <person name="Kyrpides N."/>
            <person name="Mikhailova N."/>
            <person name="Marx C."/>
            <person name="Richardson P."/>
        </authorList>
    </citation>
    <scope>NUCLEOTIDE SEQUENCE [LARGE SCALE GENOMIC DNA]</scope>
    <source>
        <strain>ATCC BAA-705 / NCIMB 13946 / BJ001</strain>
    </source>
</reference>
<proteinExistence type="inferred from homology"/>
<gene>
    <name evidence="1" type="primary">ureG1</name>
    <name type="ordered locus">Mpop_3202</name>
</gene>
<feature type="chain" id="PRO_0000347405" description="Urease accessory protein UreG 1">
    <location>
        <begin position="1"/>
        <end position="204"/>
    </location>
</feature>
<feature type="binding site" evidence="1">
    <location>
        <begin position="14"/>
        <end position="21"/>
    </location>
    <ligand>
        <name>GTP</name>
        <dbReference type="ChEBI" id="CHEBI:37565"/>
    </ligand>
</feature>
<sequence length="204" mass="21849">MASLNGPLRVGIGGPVGSGKTALMEQLCRRFRDRYEICAITNDIYTKEDARILTVAGALPEERILGVETGGCPHTAIREDASINLAAVAEMRRRFPKLDLVLIESGGDNLAATFSPELADITLYVIDVAGGEKIPRKGGPGITRSDLLIVNKTDLAPLVGADLSVMESDTQRMRGTRPYVFASLREGHGADRVATFIVEAGGLR</sequence>
<evidence type="ECO:0000255" key="1">
    <source>
        <dbReference type="HAMAP-Rule" id="MF_01389"/>
    </source>
</evidence>
<organism>
    <name type="scientific">Methylorubrum populi (strain ATCC BAA-705 / NCIMB 13946 / BJ001)</name>
    <name type="common">Methylobacterium populi</name>
    <dbReference type="NCBI Taxonomy" id="441620"/>
    <lineage>
        <taxon>Bacteria</taxon>
        <taxon>Pseudomonadati</taxon>
        <taxon>Pseudomonadota</taxon>
        <taxon>Alphaproteobacteria</taxon>
        <taxon>Hyphomicrobiales</taxon>
        <taxon>Methylobacteriaceae</taxon>
        <taxon>Methylorubrum</taxon>
    </lineage>
</organism>
<dbReference type="EMBL" id="CP001029">
    <property type="protein sequence ID" value="ACB81354.1"/>
    <property type="molecule type" value="Genomic_DNA"/>
</dbReference>
<dbReference type="RefSeq" id="WP_012455071.1">
    <property type="nucleotide sequence ID" value="NC_010725.1"/>
</dbReference>
<dbReference type="SMR" id="B1ZHN6"/>
<dbReference type="STRING" id="441620.Mpop_3202"/>
<dbReference type="KEGG" id="mpo:Mpop_3202"/>
<dbReference type="eggNOG" id="COG0378">
    <property type="taxonomic scope" value="Bacteria"/>
</dbReference>
<dbReference type="HOGENOM" id="CLU_072144_1_0_5"/>
<dbReference type="OrthoDB" id="9802035at2"/>
<dbReference type="Proteomes" id="UP000007136">
    <property type="component" value="Chromosome"/>
</dbReference>
<dbReference type="GO" id="GO:0005737">
    <property type="term" value="C:cytoplasm"/>
    <property type="evidence" value="ECO:0007669"/>
    <property type="project" value="UniProtKB-SubCell"/>
</dbReference>
<dbReference type="GO" id="GO:0005525">
    <property type="term" value="F:GTP binding"/>
    <property type="evidence" value="ECO:0007669"/>
    <property type="project" value="UniProtKB-KW"/>
</dbReference>
<dbReference type="GO" id="GO:0003924">
    <property type="term" value="F:GTPase activity"/>
    <property type="evidence" value="ECO:0007669"/>
    <property type="project" value="InterPro"/>
</dbReference>
<dbReference type="GO" id="GO:0016151">
    <property type="term" value="F:nickel cation binding"/>
    <property type="evidence" value="ECO:0007669"/>
    <property type="project" value="UniProtKB-UniRule"/>
</dbReference>
<dbReference type="GO" id="GO:0043419">
    <property type="term" value="P:urea catabolic process"/>
    <property type="evidence" value="ECO:0007669"/>
    <property type="project" value="InterPro"/>
</dbReference>
<dbReference type="CDD" id="cd05540">
    <property type="entry name" value="UreG"/>
    <property type="match status" value="1"/>
</dbReference>
<dbReference type="FunFam" id="3.40.50.300:FF:000208">
    <property type="entry name" value="Urease accessory protein UreG"/>
    <property type="match status" value="1"/>
</dbReference>
<dbReference type="Gene3D" id="3.40.50.300">
    <property type="entry name" value="P-loop containing nucleotide triphosphate hydrolases"/>
    <property type="match status" value="1"/>
</dbReference>
<dbReference type="HAMAP" id="MF_01389">
    <property type="entry name" value="UreG"/>
    <property type="match status" value="1"/>
</dbReference>
<dbReference type="InterPro" id="IPR003495">
    <property type="entry name" value="CobW/HypB/UreG_nucleotide-bd"/>
</dbReference>
<dbReference type="InterPro" id="IPR027417">
    <property type="entry name" value="P-loop_NTPase"/>
</dbReference>
<dbReference type="InterPro" id="IPR004400">
    <property type="entry name" value="UreG"/>
</dbReference>
<dbReference type="NCBIfam" id="TIGR00101">
    <property type="entry name" value="ureG"/>
    <property type="match status" value="1"/>
</dbReference>
<dbReference type="PANTHER" id="PTHR31715">
    <property type="entry name" value="UREASE ACCESSORY PROTEIN G"/>
    <property type="match status" value="1"/>
</dbReference>
<dbReference type="PANTHER" id="PTHR31715:SF0">
    <property type="entry name" value="UREASE ACCESSORY PROTEIN G"/>
    <property type="match status" value="1"/>
</dbReference>
<dbReference type="Pfam" id="PF02492">
    <property type="entry name" value="cobW"/>
    <property type="match status" value="1"/>
</dbReference>
<dbReference type="PIRSF" id="PIRSF005624">
    <property type="entry name" value="Ni-bind_GTPase"/>
    <property type="match status" value="1"/>
</dbReference>
<dbReference type="SUPFAM" id="SSF52540">
    <property type="entry name" value="P-loop containing nucleoside triphosphate hydrolases"/>
    <property type="match status" value="1"/>
</dbReference>
<name>UREG1_METPB</name>
<keyword id="KW-0143">Chaperone</keyword>
<keyword id="KW-0963">Cytoplasm</keyword>
<keyword id="KW-0342">GTP-binding</keyword>
<keyword id="KW-0996">Nickel insertion</keyword>
<keyword id="KW-0547">Nucleotide-binding</keyword>
<comment type="function">
    <text evidence="1">Facilitates the functional incorporation of the urease nickel metallocenter. This process requires GTP hydrolysis, probably effectuated by UreG.</text>
</comment>
<comment type="subunit">
    <text evidence="1">Homodimer. UreD, UreF and UreG form a complex that acts as a GTP-hydrolysis-dependent molecular chaperone, activating the urease apoprotein by helping to assemble the nickel containing metallocenter of UreC. The UreE protein probably delivers the nickel.</text>
</comment>
<comment type="subcellular location">
    <subcellularLocation>
        <location evidence="1">Cytoplasm</location>
    </subcellularLocation>
</comment>
<comment type="similarity">
    <text evidence="1">Belongs to the SIMIBI class G3E GTPase family. UreG subfamily.</text>
</comment>